<keyword id="KW-0378">Hydrolase</keyword>
<keyword id="KW-0479">Metal-binding</keyword>
<keyword id="KW-0862">Zinc</keyword>
<name>MSHB_THEFY</name>
<gene>
    <name evidence="1" type="primary">mshB</name>
    <name type="ordered locus">Tfu_0486</name>
</gene>
<sequence>MNDRRLLLVHAHPDDETIVTGATMARYAAEGAHITLVTCTLGEEGEVIPPELAHLASDREGGLGEYRVTELERACAALGVHDQRFLGGKGRYRDSGMMGAPTNSHPACFWQADVDTAAHELAAIIREVRPQVIVTYDDNGGYGHPDHIQAHRVTMRAFAQAADPSLPGTPWQARKLYAIAQPRKLLEESVARMQADPGPFTAPTAVEDIAPGTPDDLVTTRIDGSAYWEKKRDALQAHATQVAVAGTRFALSNGIAQEIHAVEYFTLLHGPEPRRGPDGYETDLFA</sequence>
<feature type="chain" id="PRO_0000400230" description="1D-myo-inositol 2-acetamido-2-deoxy-alpha-D-glucopyranoside deacetylase">
    <location>
        <begin position="1"/>
        <end position="286"/>
    </location>
</feature>
<feature type="binding site" evidence="1">
    <location>
        <position position="12"/>
    </location>
    <ligand>
        <name>Zn(2+)</name>
        <dbReference type="ChEBI" id="CHEBI:29105"/>
    </ligand>
</feature>
<feature type="binding site" evidence="1">
    <location>
        <position position="15"/>
    </location>
    <ligand>
        <name>Zn(2+)</name>
        <dbReference type="ChEBI" id="CHEBI:29105"/>
    </ligand>
</feature>
<feature type="binding site" evidence="1">
    <location>
        <position position="147"/>
    </location>
    <ligand>
        <name>Zn(2+)</name>
        <dbReference type="ChEBI" id="CHEBI:29105"/>
    </ligand>
</feature>
<organism>
    <name type="scientific">Thermobifida fusca (strain YX)</name>
    <dbReference type="NCBI Taxonomy" id="269800"/>
    <lineage>
        <taxon>Bacteria</taxon>
        <taxon>Bacillati</taxon>
        <taxon>Actinomycetota</taxon>
        <taxon>Actinomycetes</taxon>
        <taxon>Streptosporangiales</taxon>
        <taxon>Nocardiopsidaceae</taxon>
        <taxon>Thermobifida</taxon>
    </lineage>
</organism>
<proteinExistence type="inferred from homology"/>
<evidence type="ECO:0000255" key="1">
    <source>
        <dbReference type="HAMAP-Rule" id="MF_01696"/>
    </source>
</evidence>
<protein>
    <recommendedName>
        <fullName evidence="1">1D-myo-inositol 2-acetamido-2-deoxy-alpha-D-glucopyranoside deacetylase</fullName>
        <shortName evidence="1">GlcNAc-Ins deacetylase</shortName>
        <ecNumber evidence="1">3.5.1.103</ecNumber>
    </recommendedName>
    <alternativeName>
        <fullName>N-acetyl-1-D-myo-inositol 2-amino-2-deoxy-alpha-D-glucopyranoside deacetylase</fullName>
    </alternativeName>
</protein>
<comment type="function">
    <text evidence="1">Catalyzes the deacetylation of 1D-myo-inositol 2-acetamido-2-deoxy-alpha-D-glucopyranoside (GlcNAc-Ins) in the mycothiol biosynthesis pathway.</text>
</comment>
<comment type="catalytic activity">
    <reaction evidence="1">
        <text>1D-myo-inositol 2-acetamido-2-deoxy-alpha-D-glucopyranoside + H2O = 1D-myo-inositol 2-amino-2-deoxy-alpha-D-glucopyranoside + acetate</text>
        <dbReference type="Rhea" id="RHEA:26180"/>
        <dbReference type="ChEBI" id="CHEBI:15377"/>
        <dbReference type="ChEBI" id="CHEBI:30089"/>
        <dbReference type="ChEBI" id="CHEBI:52442"/>
        <dbReference type="ChEBI" id="CHEBI:58886"/>
        <dbReference type="EC" id="3.5.1.103"/>
    </reaction>
</comment>
<comment type="cofactor">
    <cofactor evidence="1">
        <name>Zn(2+)</name>
        <dbReference type="ChEBI" id="CHEBI:29105"/>
    </cofactor>
    <text evidence="1">Binds 1 zinc ion per subunit.</text>
</comment>
<comment type="similarity">
    <text evidence="1">Belongs to the MshB deacetylase family.</text>
</comment>
<reference key="1">
    <citation type="journal article" date="2007" name="J. Bacteriol.">
        <title>Genome sequence and analysis of the soil cellulolytic actinomycete Thermobifida fusca YX.</title>
        <authorList>
            <person name="Lykidis A."/>
            <person name="Mavromatis K."/>
            <person name="Ivanova N."/>
            <person name="Anderson I."/>
            <person name="Land M."/>
            <person name="DiBartolo G."/>
            <person name="Martinez M."/>
            <person name="Lapidus A."/>
            <person name="Lucas S."/>
            <person name="Copeland A."/>
            <person name="Richardson P."/>
            <person name="Wilson D.B."/>
            <person name="Kyrpides N."/>
        </authorList>
    </citation>
    <scope>NUCLEOTIDE SEQUENCE [LARGE SCALE GENOMIC DNA]</scope>
    <source>
        <strain>YX</strain>
    </source>
</reference>
<dbReference type="EC" id="3.5.1.103" evidence="1"/>
<dbReference type="EMBL" id="CP000088">
    <property type="protein sequence ID" value="AAZ54524.1"/>
    <property type="molecule type" value="Genomic_DNA"/>
</dbReference>
<dbReference type="RefSeq" id="WP_011290933.1">
    <property type="nucleotide sequence ID" value="NC_007333.1"/>
</dbReference>
<dbReference type="SMR" id="Q47SP3"/>
<dbReference type="STRING" id="269800.Tfu_0486"/>
<dbReference type="KEGG" id="tfu:Tfu_0486"/>
<dbReference type="eggNOG" id="COG2120">
    <property type="taxonomic scope" value="Bacteria"/>
</dbReference>
<dbReference type="HOGENOM" id="CLU_049311_2_1_11"/>
<dbReference type="OrthoDB" id="158614at2"/>
<dbReference type="GO" id="GO:0035595">
    <property type="term" value="F:N-acetylglucosaminylinositol deacetylase activity"/>
    <property type="evidence" value="ECO:0007669"/>
    <property type="project" value="UniProtKB-EC"/>
</dbReference>
<dbReference type="GO" id="GO:0008270">
    <property type="term" value="F:zinc ion binding"/>
    <property type="evidence" value="ECO:0007669"/>
    <property type="project" value="UniProtKB-UniRule"/>
</dbReference>
<dbReference type="GO" id="GO:0010125">
    <property type="term" value="P:mycothiol biosynthetic process"/>
    <property type="evidence" value="ECO:0007669"/>
    <property type="project" value="UniProtKB-UniRule"/>
</dbReference>
<dbReference type="Gene3D" id="3.40.50.10320">
    <property type="entry name" value="LmbE-like"/>
    <property type="match status" value="1"/>
</dbReference>
<dbReference type="HAMAP" id="MF_01696">
    <property type="entry name" value="MshB"/>
    <property type="match status" value="1"/>
</dbReference>
<dbReference type="InterPro" id="IPR003737">
    <property type="entry name" value="GlcNAc_PI_deacetylase-related"/>
</dbReference>
<dbReference type="InterPro" id="IPR024078">
    <property type="entry name" value="LmbE-like_dom_sf"/>
</dbReference>
<dbReference type="InterPro" id="IPR017810">
    <property type="entry name" value="Mycothiol_biosynthesis_MshB"/>
</dbReference>
<dbReference type="NCBIfam" id="TIGR03445">
    <property type="entry name" value="mycothiol_MshB"/>
    <property type="match status" value="1"/>
</dbReference>
<dbReference type="PANTHER" id="PTHR12993:SF26">
    <property type="entry name" value="1D-MYO-INOSITOL 2-ACETAMIDO-2-DEOXY-ALPHA-D-GLUCOPYRANOSIDE DEACETYLASE"/>
    <property type="match status" value="1"/>
</dbReference>
<dbReference type="PANTHER" id="PTHR12993">
    <property type="entry name" value="N-ACETYLGLUCOSAMINYL-PHOSPHATIDYLINOSITOL DE-N-ACETYLASE-RELATED"/>
    <property type="match status" value="1"/>
</dbReference>
<dbReference type="Pfam" id="PF02585">
    <property type="entry name" value="PIG-L"/>
    <property type="match status" value="1"/>
</dbReference>
<dbReference type="SUPFAM" id="SSF102588">
    <property type="entry name" value="LmbE-like"/>
    <property type="match status" value="1"/>
</dbReference>
<accession>Q47SP3</accession>